<keyword id="KW-0106">Calcium</keyword>
<keyword id="KW-0176">Collagen</keyword>
<keyword id="KW-1015">Disulfide bond</keyword>
<keyword id="KW-0272">Extracellular matrix</keyword>
<keyword id="KW-0379">Hydroxylation</keyword>
<keyword id="KW-0479">Metal-binding</keyword>
<keyword id="KW-1185">Reference proteome</keyword>
<keyword id="KW-0677">Repeat</keyword>
<keyword id="KW-0964">Secreted</keyword>
<keyword id="KW-0732">Signal</keyword>
<protein>
    <recommendedName>
        <fullName>Collagen alpha-1(X) chain</fullName>
    </recommendedName>
</protein>
<proteinExistence type="evidence at transcript level"/>
<comment type="function">
    <text>Type X collagen is a product of hypertrophic chondrocytes and has been localized to presumptive mineralization zones of hyaline cartilage.</text>
</comment>
<comment type="subunit">
    <text>Homotrimer.</text>
</comment>
<comment type="subcellular location">
    <subcellularLocation>
        <location evidence="1">Secreted</location>
        <location evidence="1">Extracellular space</location>
        <location evidence="1">Extracellular matrix</location>
    </subcellularLocation>
</comment>
<comment type="PTM">
    <text evidence="1">Hydroxylation on proline residues within the sequence motif, GXPG, is most likely to be 4-hydroxy as this fits the requirement for 4-hydroxylation in vertebrates.</text>
</comment>
<name>COAA1_BOVIN</name>
<feature type="signal peptide">
    <location>
        <begin position="1"/>
        <end position="18"/>
    </location>
</feature>
<feature type="chain" id="PRO_0000005768" description="Collagen alpha-1(X) chain">
    <location>
        <begin position="19"/>
        <end position="674"/>
    </location>
</feature>
<feature type="domain" description="C1q" evidence="3">
    <location>
        <begin position="541"/>
        <end position="674"/>
    </location>
</feature>
<feature type="region of interest" description="Nonhelical region (NC2)">
    <location>
        <begin position="19"/>
        <end position="56"/>
    </location>
</feature>
<feature type="region of interest" description="Disordered" evidence="4">
    <location>
        <begin position="54"/>
        <end position="521"/>
    </location>
</feature>
<feature type="region of interest" description="Triple-helical region">
    <location>
        <begin position="57"/>
        <end position="519"/>
    </location>
</feature>
<feature type="region of interest" description="Nonhelical region (NC1)">
    <location>
        <begin position="520"/>
        <end position="674"/>
    </location>
</feature>
<feature type="compositionally biased region" description="Low complexity" evidence="4">
    <location>
        <begin position="106"/>
        <end position="116"/>
    </location>
</feature>
<feature type="compositionally biased region" description="Pro residues" evidence="4">
    <location>
        <begin position="137"/>
        <end position="147"/>
    </location>
</feature>
<feature type="compositionally biased region" description="Pro residues" evidence="4">
    <location>
        <begin position="207"/>
        <end position="217"/>
    </location>
</feature>
<feature type="compositionally biased region" description="Low complexity" evidence="4">
    <location>
        <begin position="277"/>
        <end position="293"/>
    </location>
</feature>
<feature type="compositionally biased region" description="Low complexity" evidence="4">
    <location>
        <begin position="303"/>
        <end position="312"/>
    </location>
</feature>
<feature type="compositionally biased region" description="Low complexity" evidence="4">
    <location>
        <begin position="393"/>
        <end position="403"/>
    </location>
</feature>
<feature type="compositionally biased region" description="Low complexity" evidence="4">
    <location>
        <begin position="441"/>
        <end position="453"/>
    </location>
</feature>
<feature type="compositionally biased region" description="Pro residues" evidence="4">
    <location>
        <begin position="506"/>
        <end position="516"/>
    </location>
</feature>
<feature type="binding site" evidence="2">
    <location>
        <position position="620"/>
    </location>
    <ligand>
        <name>Ca(2+)</name>
        <dbReference type="ChEBI" id="CHEBI:29108"/>
        <label>1</label>
    </ligand>
</feature>
<feature type="binding site" evidence="2">
    <location>
        <position position="621"/>
    </location>
    <ligand>
        <name>Ca(2+)</name>
        <dbReference type="ChEBI" id="CHEBI:29108"/>
        <label>1</label>
    </ligand>
</feature>
<feature type="binding site" evidence="2">
    <location>
        <position position="627"/>
    </location>
    <ligand>
        <name>Ca(2+)</name>
        <dbReference type="ChEBI" id="CHEBI:29108"/>
        <label>1</label>
    </ligand>
</feature>
<feature type="binding site" evidence="2">
    <location>
        <position position="628"/>
    </location>
    <ligand>
        <name>Ca(2+)</name>
        <dbReference type="ChEBI" id="CHEBI:29108"/>
        <label>1</label>
    </ligand>
</feature>
<feature type="binding site" evidence="2">
    <location>
        <position position="628"/>
    </location>
    <ligand>
        <name>Ca(2+)</name>
        <dbReference type="ChEBI" id="CHEBI:29108"/>
        <label>2</label>
        <note>ligand shared between two neighboring subunits</note>
    </ligand>
</feature>
<feature type="modified residue" description="4-hydroxyproline" evidence="1">
    <location>
        <position position="460"/>
    </location>
</feature>
<feature type="modified residue" description="4-hydroxyproline" evidence="1">
    <location>
        <position position="463"/>
    </location>
</feature>
<feature type="disulfide bond" evidence="1">
    <location>
        <begin position="194"/>
        <end position="197"/>
    </location>
</feature>
<sequence length="674" mass="65546">MLPQTALLLLMSLNLVHGVFYTERYQTPTGIKGPPSNTKTQFFIPYAIKGKGVSLRGEQGIPGPPGPAGPRGHPGPSGPPGKPGTGSPGPQGQPGLPGPPGPSATGKPGLPGLPGKQGERGLNGPKGDIGPAGLPGPRGPPGPPGIPGPAGISVPGKPGPQGPTGEPGPRGFPGEKGTSGVPGLNGQKGEMGHCTPCRPGERGLPGPQGPTGPPGPPGVGKRGENGLPGQPGLKGDQGVPGERGAAGPSGPQGPPGEQGPEGIGKPGAPGIPGQPGIPGMKGQPGAPGTAGLPGAPGFGKPGLPGLKGQRGPVGLPGSPGAKGEQGPAGHPGEAGLPGPSGNMGPQGPKGIPGNPGLPGPKGEMGPVGPAGNPGAKGERGSSGLDGKPGYPGEPGLNGPKGNPGLPGPKGDPGIAGSPGLPGPVGPAGAKGVPGHNGEAGPRGVPGIPGTRGPIGPPGIPGFPGSKGDVGTPGPPGPAGIAVKGLNGPTGPPGPPGPRGNAGEPGLPGPPGPPGPPGQVALPEDFVKAGQRPFVSANQGVTGMPVSAFTVILSKAYPAIGTPIPFDKILYNKQQHYDPRTGIFTCKIPGIYYFSYHIHVKGTHAWVGLYKNGTPVMYTYDEYIKGYLDQASGSAVIDLTENDQVWLQLPNAGSNGLYSPEYVHSSFSGFLVAPM</sequence>
<reference key="1">
    <citation type="journal article" date="1991" name="Biochem. J.">
        <title>Isolation of cDNAs encoding the complete sequence of bovine type X collagen. Evidence for the condensed nature of mammalian type X collagen genes.</title>
        <authorList>
            <person name="Thomas J.T."/>
            <person name="Kwan A.P.L."/>
            <person name="Grant M.E."/>
            <person name="Boot-Handford R.P."/>
        </authorList>
    </citation>
    <scope>NUCLEOTIDE SEQUENCE [MRNA]</scope>
    <source>
        <tissue>Cartilage</tissue>
    </source>
</reference>
<gene>
    <name type="primary">COL10A1</name>
</gene>
<evidence type="ECO:0000250" key="1"/>
<evidence type="ECO:0000250" key="2">
    <source>
        <dbReference type="UniProtKB" id="Q03692"/>
    </source>
</evidence>
<evidence type="ECO:0000255" key="3">
    <source>
        <dbReference type="PROSITE-ProRule" id="PRU00368"/>
    </source>
</evidence>
<evidence type="ECO:0000256" key="4">
    <source>
        <dbReference type="SAM" id="MobiDB-lite"/>
    </source>
</evidence>
<accession>P23206</accession>
<organism>
    <name type="scientific">Bos taurus</name>
    <name type="common">Bovine</name>
    <dbReference type="NCBI Taxonomy" id="9913"/>
    <lineage>
        <taxon>Eukaryota</taxon>
        <taxon>Metazoa</taxon>
        <taxon>Chordata</taxon>
        <taxon>Craniata</taxon>
        <taxon>Vertebrata</taxon>
        <taxon>Euteleostomi</taxon>
        <taxon>Mammalia</taxon>
        <taxon>Eutheria</taxon>
        <taxon>Laurasiatheria</taxon>
        <taxon>Artiodactyla</taxon>
        <taxon>Ruminantia</taxon>
        <taxon>Pecora</taxon>
        <taxon>Bovidae</taxon>
        <taxon>Bovinae</taxon>
        <taxon>Bos</taxon>
    </lineage>
</organism>
<dbReference type="EMBL" id="X53556">
    <property type="protein sequence ID" value="CAA37624.1"/>
    <property type="molecule type" value="mRNA"/>
</dbReference>
<dbReference type="PIR" id="S13301">
    <property type="entry name" value="S13301"/>
</dbReference>
<dbReference type="RefSeq" id="NP_777059.1">
    <property type="nucleotide sequence ID" value="NM_174634.1"/>
</dbReference>
<dbReference type="SMR" id="P23206"/>
<dbReference type="FunCoup" id="P23206">
    <property type="interactions" value="88"/>
</dbReference>
<dbReference type="STRING" id="9913.ENSBTAP00000004006"/>
<dbReference type="PaxDb" id="9913-ENSBTAP00000004006"/>
<dbReference type="GeneID" id="282416"/>
<dbReference type="KEGG" id="bta:282416"/>
<dbReference type="CTD" id="1300"/>
<dbReference type="eggNOG" id="ENOG502QS5V">
    <property type="taxonomic scope" value="Eukaryota"/>
</dbReference>
<dbReference type="InParanoid" id="P23206"/>
<dbReference type="OrthoDB" id="10021193at2759"/>
<dbReference type="Proteomes" id="UP000009136">
    <property type="component" value="Unplaced"/>
</dbReference>
<dbReference type="GO" id="GO:0005581">
    <property type="term" value="C:collagen trimer"/>
    <property type="evidence" value="ECO:0007669"/>
    <property type="project" value="UniProtKB-KW"/>
</dbReference>
<dbReference type="GO" id="GO:0005576">
    <property type="term" value="C:extracellular region"/>
    <property type="evidence" value="ECO:0000304"/>
    <property type="project" value="Reactome"/>
</dbReference>
<dbReference type="GO" id="GO:0046872">
    <property type="term" value="F:metal ion binding"/>
    <property type="evidence" value="ECO:0007669"/>
    <property type="project" value="UniProtKB-KW"/>
</dbReference>
<dbReference type="FunFam" id="2.60.120.40:FF:000001">
    <property type="entry name" value="Complement C1q B chain"/>
    <property type="match status" value="1"/>
</dbReference>
<dbReference type="Gene3D" id="2.60.120.40">
    <property type="match status" value="1"/>
</dbReference>
<dbReference type="InterPro" id="IPR001073">
    <property type="entry name" value="C1q_dom"/>
</dbReference>
<dbReference type="InterPro" id="IPR008160">
    <property type="entry name" value="Collagen"/>
</dbReference>
<dbReference type="InterPro" id="IPR050392">
    <property type="entry name" value="Collagen/C1q_domain"/>
</dbReference>
<dbReference type="InterPro" id="IPR008983">
    <property type="entry name" value="Tumour_necrosis_fac-like_dom"/>
</dbReference>
<dbReference type="PANTHER" id="PTHR15427:SF33">
    <property type="entry name" value="COLLAGEN IV NC1 DOMAIN-CONTAINING PROTEIN"/>
    <property type="match status" value="1"/>
</dbReference>
<dbReference type="PANTHER" id="PTHR15427">
    <property type="entry name" value="EMILIN ELASTIN MICROFIBRIL INTERFACE-LOCATED PROTEIN ELASTIN MICROFIBRIL INTERFACER"/>
    <property type="match status" value="1"/>
</dbReference>
<dbReference type="Pfam" id="PF00386">
    <property type="entry name" value="C1q"/>
    <property type="match status" value="1"/>
</dbReference>
<dbReference type="Pfam" id="PF01391">
    <property type="entry name" value="Collagen"/>
    <property type="match status" value="4"/>
</dbReference>
<dbReference type="PRINTS" id="PR00007">
    <property type="entry name" value="COMPLEMNTC1Q"/>
</dbReference>
<dbReference type="SMART" id="SM00110">
    <property type="entry name" value="C1Q"/>
    <property type="match status" value="1"/>
</dbReference>
<dbReference type="SUPFAM" id="SSF49842">
    <property type="entry name" value="TNF-like"/>
    <property type="match status" value="1"/>
</dbReference>
<dbReference type="PROSITE" id="PS50871">
    <property type="entry name" value="C1Q"/>
    <property type="match status" value="1"/>
</dbReference>